<reference key="1">
    <citation type="submission" date="2007-03" db="EMBL/GenBank/DDBJ databases">
        <title>Complete sequence of Shewanella loihica PV-4.</title>
        <authorList>
            <consortium name="US DOE Joint Genome Institute"/>
            <person name="Copeland A."/>
            <person name="Lucas S."/>
            <person name="Lapidus A."/>
            <person name="Barry K."/>
            <person name="Detter J.C."/>
            <person name="Glavina del Rio T."/>
            <person name="Hammon N."/>
            <person name="Israni S."/>
            <person name="Dalin E."/>
            <person name="Tice H."/>
            <person name="Pitluck S."/>
            <person name="Chain P."/>
            <person name="Malfatti S."/>
            <person name="Shin M."/>
            <person name="Vergez L."/>
            <person name="Schmutz J."/>
            <person name="Larimer F."/>
            <person name="Land M."/>
            <person name="Hauser L."/>
            <person name="Kyrpides N."/>
            <person name="Mikhailova N."/>
            <person name="Romine M.F."/>
            <person name="Serres G."/>
            <person name="Fredrickson J."/>
            <person name="Tiedje J."/>
            <person name="Richardson P."/>
        </authorList>
    </citation>
    <scope>NUCLEOTIDE SEQUENCE [LARGE SCALE GENOMIC DNA]</scope>
    <source>
        <strain>ATCC BAA-1088 / PV-4</strain>
    </source>
</reference>
<gene>
    <name evidence="1" type="primary">argR</name>
    <name type="ordered locus">Shew_0866</name>
</gene>
<keyword id="KW-0028">Amino-acid biosynthesis</keyword>
<keyword id="KW-0055">Arginine biosynthesis</keyword>
<keyword id="KW-0963">Cytoplasm</keyword>
<keyword id="KW-0238">DNA-binding</keyword>
<keyword id="KW-1185">Reference proteome</keyword>
<keyword id="KW-0678">Repressor</keyword>
<keyword id="KW-0804">Transcription</keyword>
<keyword id="KW-0805">Transcription regulation</keyword>
<dbReference type="EMBL" id="CP000606">
    <property type="protein sequence ID" value="ABO22738.1"/>
    <property type="molecule type" value="Genomic_DNA"/>
</dbReference>
<dbReference type="RefSeq" id="WP_011864672.1">
    <property type="nucleotide sequence ID" value="NC_009092.1"/>
</dbReference>
<dbReference type="SMR" id="A3QB90"/>
<dbReference type="STRING" id="323850.Shew_0866"/>
<dbReference type="KEGG" id="slo:Shew_0866"/>
<dbReference type="eggNOG" id="COG1438">
    <property type="taxonomic scope" value="Bacteria"/>
</dbReference>
<dbReference type="HOGENOM" id="CLU_097103_2_0_6"/>
<dbReference type="OrthoDB" id="7060358at2"/>
<dbReference type="UniPathway" id="UPA00068"/>
<dbReference type="Proteomes" id="UP000001558">
    <property type="component" value="Chromosome"/>
</dbReference>
<dbReference type="GO" id="GO:0005737">
    <property type="term" value="C:cytoplasm"/>
    <property type="evidence" value="ECO:0007669"/>
    <property type="project" value="UniProtKB-SubCell"/>
</dbReference>
<dbReference type="GO" id="GO:0034618">
    <property type="term" value="F:arginine binding"/>
    <property type="evidence" value="ECO:0007669"/>
    <property type="project" value="InterPro"/>
</dbReference>
<dbReference type="GO" id="GO:0003677">
    <property type="term" value="F:DNA binding"/>
    <property type="evidence" value="ECO:0007669"/>
    <property type="project" value="UniProtKB-KW"/>
</dbReference>
<dbReference type="GO" id="GO:0003700">
    <property type="term" value="F:DNA-binding transcription factor activity"/>
    <property type="evidence" value="ECO:0007669"/>
    <property type="project" value="UniProtKB-UniRule"/>
</dbReference>
<dbReference type="GO" id="GO:0006526">
    <property type="term" value="P:L-arginine biosynthetic process"/>
    <property type="evidence" value="ECO:0007669"/>
    <property type="project" value="UniProtKB-UniPathway"/>
</dbReference>
<dbReference type="GO" id="GO:0051259">
    <property type="term" value="P:protein complex oligomerization"/>
    <property type="evidence" value="ECO:0007669"/>
    <property type="project" value="InterPro"/>
</dbReference>
<dbReference type="GO" id="GO:1900079">
    <property type="term" value="P:regulation of arginine biosynthetic process"/>
    <property type="evidence" value="ECO:0007669"/>
    <property type="project" value="UniProtKB-UniRule"/>
</dbReference>
<dbReference type="Gene3D" id="3.30.1360.40">
    <property type="match status" value="1"/>
</dbReference>
<dbReference type="Gene3D" id="1.10.10.10">
    <property type="entry name" value="Winged helix-like DNA-binding domain superfamily/Winged helix DNA-binding domain"/>
    <property type="match status" value="1"/>
</dbReference>
<dbReference type="HAMAP" id="MF_00173">
    <property type="entry name" value="Arg_repressor"/>
    <property type="match status" value="1"/>
</dbReference>
<dbReference type="InterPro" id="IPR001669">
    <property type="entry name" value="Arg_repress"/>
</dbReference>
<dbReference type="InterPro" id="IPR020899">
    <property type="entry name" value="Arg_repress_C"/>
</dbReference>
<dbReference type="InterPro" id="IPR036251">
    <property type="entry name" value="Arg_repress_C_sf"/>
</dbReference>
<dbReference type="InterPro" id="IPR020900">
    <property type="entry name" value="Arg_repress_DNA-bd"/>
</dbReference>
<dbReference type="InterPro" id="IPR036388">
    <property type="entry name" value="WH-like_DNA-bd_sf"/>
</dbReference>
<dbReference type="InterPro" id="IPR036390">
    <property type="entry name" value="WH_DNA-bd_sf"/>
</dbReference>
<dbReference type="NCBIfam" id="TIGR01529">
    <property type="entry name" value="argR_whole"/>
    <property type="match status" value="1"/>
</dbReference>
<dbReference type="NCBIfam" id="NF003457">
    <property type="entry name" value="PRK05066.1"/>
    <property type="match status" value="1"/>
</dbReference>
<dbReference type="PANTHER" id="PTHR34471">
    <property type="entry name" value="ARGININE REPRESSOR"/>
    <property type="match status" value="1"/>
</dbReference>
<dbReference type="PANTHER" id="PTHR34471:SF1">
    <property type="entry name" value="ARGININE REPRESSOR"/>
    <property type="match status" value="1"/>
</dbReference>
<dbReference type="Pfam" id="PF01316">
    <property type="entry name" value="Arg_repressor"/>
    <property type="match status" value="1"/>
</dbReference>
<dbReference type="Pfam" id="PF02863">
    <property type="entry name" value="Arg_repressor_C"/>
    <property type="match status" value="1"/>
</dbReference>
<dbReference type="PRINTS" id="PR01467">
    <property type="entry name" value="ARGREPRESSOR"/>
</dbReference>
<dbReference type="SUPFAM" id="SSF55252">
    <property type="entry name" value="C-terminal domain of arginine repressor"/>
    <property type="match status" value="1"/>
</dbReference>
<dbReference type="SUPFAM" id="SSF46785">
    <property type="entry name" value="Winged helix' DNA-binding domain"/>
    <property type="match status" value="1"/>
</dbReference>
<organism>
    <name type="scientific">Shewanella loihica (strain ATCC BAA-1088 / PV-4)</name>
    <dbReference type="NCBI Taxonomy" id="323850"/>
    <lineage>
        <taxon>Bacteria</taxon>
        <taxon>Pseudomonadati</taxon>
        <taxon>Pseudomonadota</taxon>
        <taxon>Gammaproteobacteria</taxon>
        <taxon>Alteromonadales</taxon>
        <taxon>Shewanellaceae</taxon>
        <taxon>Shewanella</taxon>
    </lineage>
</organism>
<comment type="function">
    <text evidence="1">Regulates arginine biosynthesis genes.</text>
</comment>
<comment type="pathway">
    <text>Amino-acid biosynthesis; L-arginine biosynthesis [regulation].</text>
</comment>
<comment type="subcellular location">
    <subcellularLocation>
        <location evidence="1">Cytoplasm</location>
    </subcellularLocation>
</comment>
<comment type="similarity">
    <text evidence="1">Belongs to the ArgR family.</text>
</comment>
<name>ARGR_SHELP</name>
<feature type="chain" id="PRO_1000023591" description="Arginine repressor">
    <location>
        <begin position="1"/>
        <end position="156"/>
    </location>
</feature>
<proteinExistence type="inferred from homology"/>
<protein>
    <recommendedName>
        <fullName evidence="1">Arginine repressor</fullName>
    </recommendedName>
</protein>
<evidence type="ECO:0000255" key="1">
    <source>
        <dbReference type="HAMAP-Rule" id="MF_00173"/>
    </source>
</evidence>
<sequence length="156" mass="17055">MQANKNQDELVKTFKAILKEERFGSQSEIVNALQSEGFNNINQSKVSRMLSKFGAVRTRNAKQEMVYCLPAELGVPTAGSPLKNLVLDVDHNQSMIVVRTSPGAAQLIARLLDSIGKPEGILGTIAGDDTIFICPSNIQEVDKTLETVKSLFNYAD</sequence>
<accession>A3QB90</accession>